<organism>
    <name type="scientific">Escherichia coli O45:K1 (strain S88 / ExPEC)</name>
    <dbReference type="NCBI Taxonomy" id="585035"/>
    <lineage>
        <taxon>Bacteria</taxon>
        <taxon>Pseudomonadati</taxon>
        <taxon>Pseudomonadota</taxon>
        <taxon>Gammaproteobacteria</taxon>
        <taxon>Enterobacterales</taxon>
        <taxon>Enterobacteriaceae</taxon>
        <taxon>Escherichia</taxon>
    </lineage>
</organism>
<reference key="1">
    <citation type="journal article" date="2009" name="PLoS Genet.">
        <title>Organised genome dynamics in the Escherichia coli species results in highly diverse adaptive paths.</title>
        <authorList>
            <person name="Touchon M."/>
            <person name="Hoede C."/>
            <person name="Tenaillon O."/>
            <person name="Barbe V."/>
            <person name="Baeriswyl S."/>
            <person name="Bidet P."/>
            <person name="Bingen E."/>
            <person name="Bonacorsi S."/>
            <person name="Bouchier C."/>
            <person name="Bouvet O."/>
            <person name="Calteau A."/>
            <person name="Chiapello H."/>
            <person name="Clermont O."/>
            <person name="Cruveiller S."/>
            <person name="Danchin A."/>
            <person name="Diard M."/>
            <person name="Dossat C."/>
            <person name="Karoui M.E."/>
            <person name="Frapy E."/>
            <person name="Garry L."/>
            <person name="Ghigo J.M."/>
            <person name="Gilles A.M."/>
            <person name="Johnson J."/>
            <person name="Le Bouguenec C."/>
            <person name="Lescat M."/>
            <person name="Mangenot S."/>
            <person name="Martinez-Jehanne V."/>
            <person name="Matic I."/>
            <person name="Nassif X."/>
            <person name="Oztas S."/>
            <person name="Petit M.A."/>
            <person name="Pichon C."/>
            <person name="Rouy Z."/>
            <person name="Ruf C.S."/>
            <person name="Schneider D."/>
            <person name="Tourret J."/>
            <person name="Vacherie B."/>
            <person name="Vallenet D."/>
            <person name="Medigue C."/>
            <person name="Rocha E.P.C."/>
            <person name="Denamur E."/>
        </authorList>
    </citation>
    <scope>NUCLEOTIDE SEQUENCE [LARGE SCALE GENOMIC DNA]</scope>
    <source>
        <strain>S88 / ExPEC</strain>
    </source>
</reference>
<protein>
    <recommendedName>
        <fullName evidence="1">5-keto-4-deoxy-D-glucarate aldolase</fullName>
        <shortName evidence="1">KDGluc aldolase</shortName>
        <shortName evidence="1">KDGlucA</shortName>
        <ecNumber evidence="1">4.1.2.20</ecNumber>
    </recommendedName>
    <alternativeName>
        <fullName evidence="1">2-dehydro-3-deoxy-D-glucarate aldolase</fullName>
    </alternativeName>
    <alternativeName>
        <fullName evidence="1">2-keto-3-deoxy-D-glucarate aldolase</fullName>
    </alternativeName>
    <alternativeName>
        <fullName evidence="1">5-dehydro-4-deoxy-D-glucarate aldolase</fullName>
    </alternativeName>
    <alternativeName>
        <fullName evidence="1">Alpha-keto-beta-deoxy-D-glucarate aldolase</fullName>
    </alternativeName>
</protein>
<gene>
    <name evidence="1" type="primary">garL</name>
    <name type="ordered locus">ECS88_3514</name>
</gene>
<keyword id="KW-0456">Lyase</keyword>
<keyword id="KW-0460">Magnesium</keyword>
<keyword id="KW-0479">Metal-binding</keyword>
<keyword id="KW-1185">Reference proteome</keyword>
<feature type="chain" id="PRO_1000140404" description="5-keto-4-deoxy-D-glucarate aldolase">
    <location>
        <begin position="1"/>
        <end position="256"/>
    </location>
</feature>
<feature type="active site" description="Proton acceptor" evidence="1">
    <location>
        <position position="50"/>
    </location>
</feature>
<feature type="binding site" evidence="1">
    <location>
        <position position="151"/>
    </location>
    <ligand>
        <name>substrate</name>
    </ligand>
</feature>
<feature type="binding site" evidence="1">
    <location>
        <position position="153"/>
    </location>
    <ligand>
        <name>Mg(2+)</name>
        <dbReference type="ChEBI" id="CHEBI:18420"/>
    </ligand>
</feature>
<feature type="binding site" evidence="1">
    <location>
        <position position="178"/>
    </location>
    <ligand>
        <name>substrate</name>
    </ligand>
</feature>
<feature type="binding site" evidence="1">
    <location>
        <position position="179"/>
    </location>
    <ligand>
        <name>Mg(2+)</name>
        <dbReference type="ChEBI" id="CHEBI:18420"/>
    </ligand>
</feature>
<feature type="binding site" evidence="1">
    <location>
        <position position="179"/>
    </location>
    <ligand>
        <name>substrate</name>
    </ligand>
</feature>
<feature type="site" description="Transition state stabilizer" evidence="1">
    <location>
        <position position="75"/>
    </location>
</feature>
<feature type="site" description="Increases basicity of active site His" evidence="1">
    <location>
        <position position="89"/>
    </location>
</feature>
<comment type="function">
    <text evidence="1">Catalyzes the reversible retro-aldol cleavage of both 5-keto-4-deoxy-D-glucarate and 2-keto-3-deoxy-D-glucarate to pyruvate and tartronic semialdehyde.</text>
</comment>
<comment type="catalytic activity">
    <reaction evidence="1">
        <text>5-dehydro-4-deoxy-D-glucarate = 2-hydroxy-3-oxopropanoate + pyruvate</text>
        <dbReference type="Rhea" id="RHEA:27726"/>
        <dbReference type="ChEBI" id="CHEBI:15361"/>
        <dbReference type="ChEBI" id="CHEBI:42819"/>
        <dbReference type="ChEBI" id="CHEBI:57978"/>
    </reaction>
</comment>
<comment type="catalytic activity">
    <reaction evidence="1">
        <text>2-dehydro-3-deoxy-D-glucarate = 2-hydroxy-3-oxopropanoate + pyruvate</text>
        <dbReference type="Rhea" id="RHEA:10268"/>
        <dbReference type="ChEBI" id="CHEBI:15361"/>
        <dbReference type="ChEBI" id="CHEBI:57978"/>
        <dbReference type="ChEBI" id="CHEBI:58098"/>
        <dbReference type="EC" id="4.1.2.20"/>
    </reaction>
</comment>
<comment type="cofactor">
    <cofactor evidence="1">
        <name>Mg(2+)</name>
        <dbReference type="ChEBI" id="CHEBI:18420"/>
    </cofactor>
    <text evidence="1">Binds 1 Mg(2+) ion per subunit.</text>
</comment>
<comment type="pathway">
    <text evidence="1">Carbohydrate acid metabolism; galactarate degradation; D-glycerate from galactarate: step 2/3.</text>
</comment>
<comment type="subunit">
    <text evidence="1">Homohexamer; trimer of dimers.</text>
</comment>
<comment type="similarity">
    <text evidence="1">Belongs to the HpcH/HpaI aldolase family. KDGluc aldolase subfamily.</text>
</comment>
<accession>B7MB51</accession>
<dbReference type="EC" id="4.1.2.20" evidence="1"/>
<dbReference type="EMBL" id="CU928161">
    <property type="protein sequence ID" value="CAR04742.1"/>
    <property type="molecule type" value="Genomic_DNA"/>
</dbReference>
<dbReference type="RefSeq" id="WP_001058227.1">
    <property type="nucleotide sequence ID" value="NC_011742.1"/>
</dbReference>
<dbReference type="SMR" id="B7MB51"/>
<dbReference type="GeneID" id="93778860"/>
<dbReference type="KEGG" id="ecz:ECS88_3514"/>
<dbReference type="HOGENOM" id="CLU_059964_1_0_6"/>
<dbReference type="UniPathway" id="UPA00565">
    <property type="reaction ID" value="UER00630"/>
</dbReference>
<dbReference type="Proteomes" id="UP000000747">
    <property type="component" value="Chromosome"/>
</dbReference>
<dbReference type="GO" id="GO:0005737">
    <property type="term" value="C:cytoplasm"/>
    <property type="evidence" value="ECO:0007669"/>
    <property type="project" value="TreeGrafter"/>
</dbReference>
<dbReference type="GO" id="GO:0008672">
    <property type="term" value="F:2-dehydro-3-deoxyglucarate aldolase activity"/>
    <property type="evidence" value="ECO:0007669"/>
    <property type="project" value="UniProtKB-UniRule"/>
</dbReference>
<dbReference type="GO" id="GO:0000287">
    <property type="term" value="F:magnesium ion binding"/>
    <property type="evidence" value="ECO:0007669"/>
    <property type="project" value="UniProtKB-UniRule"/>
</dbReference>
<dbReference type="GO" id="GO:0042838">
    <property type="term" value="P:D-glucarate catabolic process"/>
    <property type="evidence" value="ECO:0007669"/>
    <property type="project" value="UniProtKB-UniRule"/>
</dbReference>
<dbReference type="GO" id="GO:0046392">
    <property type="term" value="P:galactarate catabolic process"/>
    <property type="evidence" value="ECO:0007669"/>
    <property type="project" value="UniProtKB-UniRule"/>
</dbReference>
<dbReference type="FunFam" id="3.20.20.60:FF:000004">
    <property type="entry name" value="5-keto-4-deoxy-D-glucarate aldolase"/>
    <property type="match status" value="1"/>
</dbReference>
<dbReference type="Gene3D" id="3.20.20.60">
    <property type="entry name" value="Phosphoenolpyruvate-binding domains"/>
    <property type="match status" value="1"/>
</dbReference>
<dbReference type="HAMAP" id="MF_01291">
    <property type="entry name" value="KDGluc_aldolase"/>
    <property type="match status" value="1"/>
</dbReference>
<dbReference type="InterPro" id="IPR005000">
    <property type="entry name" value="Aldolase/citrate-lyase_domain"/>
</dbReference>
<dbReference type="InterPro" id="IPR017648">
    <property type="entry name" value="GarL"/>
</dbReference>
<dbReference type="InterPro" id="IPR050251">
    <property type="entry name" value="HpcH-HpaI_aldolase"/>
</dbReference>
<dbReference type="InterPro" id="IPR015813">
    <property type="entry name" value="Pyrv/PenolPyrv_kinase-like_dom"/>
</dbReference>
<dbReference type="InterPro" id="IPR040442">
    <property type="entry name" value="Pyrv_kinase-like_dom_sf"/>
</dbReference>
<dbReference type="NCBIfam" id="TIGR03239">
    <property type="entry name" value="GarL"/>
    <property type="match status" value="1"/>
</dbReference>
<dbReference type="NCBIfam" id="NF007849">
    <property type="entry name" value="PRK10558.1"/>
    <property type="match status" value="1"/>
</dbReference>
<dbReference type="PANTHER" id="PTHR30502">
    <property type="entry name" value="2-KETO-3-DEOXY-L-RHAMNONATE ALDOLASE"/>
    <property type="match status" value="1"/>
</dbReference>
<dbReference type="PANTHER" id="PTHR30502:SF4">
    <property type="entry name" value="5-KETO-4-DEOXY-D-GLUCARATE ALDOLASE"/>
    <property type="match status" value="1"/>
</dbReference>
<dbReference type="Pfam" id="PF03328">
    <property type="entry name" value="HpcH_HpaI"/>
    <property type="match status" value="1"/>
</dbReference>
<dbReference type="SUPFAM" id="SSF51621">
    <property type="entry name" value="Phosphoenolpyruvate/pyruvate domain"/>
    <property type="match status" value="1"/>
</dbReference>
<proteinExistence type="inferred from homology"/>
<evidence type="ECO:0000255" key="1">
    <source>
        <dbReference type="HAMAP-Rule" id="MF_01291"/>
    </source>
</evidence>
<sequence length="256" mass="27399">MNNDVFPNKFKAALAAKQVQIGCWSALSNPISTEVLGLAGFDWLVLDGEHAPNDISTFIPQLMALKGSASAPVVRVPTNEPVIIKRLLDIGFYNFLIPFVETKEEAEQAVASTRYPPEGIRGVSVSHRANMFGTVADYFAQSNKNITILVQIESQQGVDNVDAIAATEGVDGIFVGPSDLAAALGHLGNASHPDVQKAIQHIFNRASAHGKPSGILAPVEADARRYLEWGATFVAVGSDLGVFRSATQKLADTFKK</sequence>
<name>GARL_ECO45</name>